<reference key="1">
    <citation type="journal article" date="2009" name="Science">
        <title>The genome sequence of taurine cattle: a window to ruminant biology and evolution.</title>
        <authorList>
            <consortium name="The bovine genome sequencing and analysis consortium"/>
        </authorList>
    </citation>
    <scope>NUCLEOTIDE SEQUENCE [LARGE SCALE GENOMIC DNA]</scope>
    <source>
        <strain>Hereford</strain>
    </source>
</reference>
<reference key="2">
    <citation type="submission" date="2005-10" db="EMBL/GenBank/DDBJ databases">
        <authorList>
            <consortium name="NIH - Mammalian Gene Collection (MGC) project"/>
        </authorList>
    </citation>
    <scope>NUCLEOTIDE SEQUENCE [LARGE SCALE MRNA]</scope>
    <source>
        <strain>Hereford</strain>
        <tissue>Fetal liver</tissue>
    </source>
</reference>
<protein>
    <recommendedName>
        <fullName evidence="8">Zinc finger protein 746</fullName>
    </recommendedName>
</protein>
<sequence length="630" mass="67972">MAEAAAAPISPWTMAATIQAMERKIESQAARLLSLEGRTGMAEKKLADCEKTAVEFGNQLEGKWAVLGTLLQEYGLLQRRLENVENLLRNRNFWILRLPPGSKGEAPKEWGKLDEWQKELYKHVMRGNYETLVSLDYAISKPEVLSQIEQGKEPCSWRRAGPKVPDVPVDPSPGSGPPVPAPDLLMQIKQEGELQLQEQQALGVEAWAAGQPDIGEEPWGLSQLDSGAGDVSTDAASGVHANFSTTIPPTSWQADLPPHHPSSACSDGTLKLSTAASTEADVKIVIKTEVQEEEVVATPVHPTDLEAHGTLFGPGQATRFFPSPVQEGAWESQGSSFPSQDPVLGLREPARPERDLGDPTPTVPQDETSPGDWLFGGVRWGWNFRCKPPAGLNPRTGPEGLPFSSSDNGEAVLDPGQAPRPFNDPCKYPGRTKGFGHKPGLKKHPAAPPGGRPFTCATCGKSFQLQVSLSAHQRSCGGQPDGVPGAAGSARDGSGLRCGECGRCFTRPAHLIRHRMLHTGERPFPCTECEKRFTERSKLIDHYRTHTGVRPFTCTVCGKSFIRKDHLRKHQRNHAAGAKPARGQPLPPLPAVPPDPFKSPAAKGPLAPTDLVTDWTCGLSVLGPTDGGDL</sequence>
<evidence type="ECO:0000250" key="1"/>
<evidence type="ECO:0000250" key="2">
    <source>
        <dbReference type="UniProtKB" id="Q3U133"/>
    </source>
</evidence>
<evidence type="ECO:0000250" key="3">
    <source>
        <dbReference type="UniProtKB" id="Q6NUN9"/>
    </source>
</evidence>
<evidence type="ECO:0000255" key="4"/>
<evidence type="ECO:0000255" key="5">
    <source>
        <dbReference type="PROSITE-ProRule" id="PRU00042"/>
    </source>
</evidence>
<evidence type="ECO:0000255" key="6">
    <source>
        <dbReference type="PROSITE-ProRule" id="PRU00119"/>
    </source>
</evidence>
<evidence type="ECO:0000256" key="7">
    <source>
        <dbReference type="SAM" id="MobiDB-lite"/>
    </source>
</evidence>
<evidence type="ECO:0000305" key="8"/>
<accession>Q3B7M4</accession>
<accession>E1BEU3</accession>
<name>ZN746_BOVIN</name>
<organism>
    <name type="scientific">Bos taurus</name>
    <name type="common">Bovine</name>
    <dbReference type="NCBI Taxonomy" id="9913"/>
    <lineage>
        <taxon>Eukaryota</taxon>
        <taxon>Metazoa</taxon>
        <taxon>Chordata</taxon>
        <taxon>Craniata</taxon>
        <taxon>Vertebrata</taxon>
        <taxon>Euteleostomi</taxon>
        <taxon>Mammalia</taxon>
        <taxon>Eutheria</taxon>
        <taxon>Laurasiatheria</taxon>
        <taxon>Artiodactyla</taxon>
        <taxon>Ruminantia</taxon>
        <taxon>Pecora</taxon>
        <taxon>Bovidae</taxon>
        <taxon>Bovinae</taxon>
        <taxon>Bos</taxon>
    </lineage>
</organism>
<feature type="chain" id="PRO_0000253727" description="Zinc finger protein 746">
    <location>
        <begin position="1"/>
        <end position="630"/>
    </location>
</feature>
<feature type="domain" description="KRAB" evidence="6">
    <location>
        <begin position="96"/>
        <end position="167"/>
    </location>
</feature>
<feature type="zinc finger region" description="C2H2-type 1; atypical" evidence="5">
    <location>
        <begin position="454"/>
        <end position="476"/>
    </location>
</feature>
<feature type="zinc finger region" description="C2H2-type 2" evidence="5">
    <location>
        <begin position="496"/>
        <end position="518"/>
    </location>
</feature>
<feature type="zinc finger region" description="C2H2-type 3" evidence="5">
    <location>
        <begin position="524"/>
        <end position="546"/>
    </location>
</feature>
<feature type="zinc finger region" description="C2H2-type 4; degenerate" evidence="5">
    <location>
        <begin position="552"/>
        <end position="575"/>
    </location>
</feature>
<feature type="region of interest" description="Disordered" evidence="7">
    <location>
        <begin position="155"/>
        <end position="177"/>
    </location>
</feature>
<feature type="region of interest" description="Disordered" evidence="7">
    <location>
        <begin position="326"/>
        <end position="372"/>
    </location>
</feature>
<feature type="region of interest" description="Disordered" evidence="7">
    <location>
        <begin position="408"/>
        <end position="449"/>
    </location>
</feature>
<feature type="region of interest" description="Disordered" evidence="7">
    <location>
        <begin position="568"/>
        <end position="605"/>
    </location>
</feature>
<feature type="coiled-coil region" evidence="4">
    <location>
        <begin position="16"/>
        <end position="92"/>
    </location>
</feature>
<feature type="compositionally biased region" description="Pro residues" evidence="7">
    <location>
        <begin position="168"/>
        <end position="177"/>
    </location>
</feature>
<feature type="compositionally biased region" description="Basic and acidic residues" evidence="7">
    <location>
        <begin position="348"/>
        <end position="357"/>
    </location>
</feature>
<feature type="compositionally biased region" description="Basic residues" evidence="7">
    <location>
        <begin position="434"/>
        <end position="445"/>
    </location>
</feature>
<feature type="compositionally biased region" description="Pro residues" evidence="7">
    <location>
        <begin position="585"/>
        <end position="597"/>
    </location>
</feature>
<feature type="cross-link" description="Glycyl lysine isopeptide (Lys-Gly) (interchain with G-Cter in SUMO2)" evidence="3">
    <location>
        <position position="283"/>
    </location>
</feature>
<feature type="cross-link" description="Glycyl lysine isopeptide (Lys-Gly) (interchain with G-Cter in SUMO2)" evidence="3">
    <location>
        <position position="287"/>
    </location>
</feature>
<keyword id="KW-0175">Coiled coil</keyword>
<keyword id="KW-0963">Cytoplasm</keyword>
<keyword id="KW-0238">DNA-binding</keyword>
<keyword id="KW-1017">Isopeptide bond</keyword>
<keyword id="KW-0479">Metal-binding</keyword>
<keyword id="KW-0539">Nucleus</keyword>
<keyword id="KW-1185">Reference proteome</keyword>
<keyword id="KW-0677">Repeat</keyword>
<keyword id="KW-0678">Repressor</keyword>
<keyword id="KW-0804">Transcription</keyword>
<keyword id="KW-0805">Transcription regulation</keyword>
<keyword id="KW-0832">Ubl conjugation</keyword>
<keyword id="KW-0862">Zinc</keyword>
<keyword id="KW-0863">Zinc-finger</keyword>
<proteinExistence type="evidence at transcript level"/>
<dbReference type="EMBL" id="AAFC03042442">
    <property type="status" value="NOT_ANNOTATED_CDS"/>
    <property type="molecule type" value="Genomic_DNA"/>
</dbReference>
<dbReference type="EMBL" id="AAFC03042444">
    <property type="status" value="NOT_ANNOTATED_CDS"/>
    <property type="molecule type" value="Genomic_DNA"/>
</dbReference>
<dbReference type="EMBL" id="AAFC03054460">
    <property type="status" value="NOT_ANNOTATED_CDS"/>
    <property type="molecule type" value="Genomic_DNA"/>
</dbReference>
<dbReference type="EMBL" id="BC107543">
    <property type="protein sequence ID" value="AAI07544.1"/>
    <property type="molecule type" value="mRNA"/>
</dbReference>
<dbReference type="RefSeq" id="NP_001030418.1">
    <property type="nucleotide sequence ID" value="NM_001035341.1"/>
</dbReference>
<dbReference type="SMR" id="Q3B7M4"/>
<dbReference type="FunCoup" id="Q3B7M4">
    <property type="interactions" value="2426"/>
</dbReference>
<dbReference type="STRING" id="9913.ENSBTAP00000018668"/>
<dbReference type="PaxDb" id="9913-ENSBTAP00000018668"/>
<dbReference type="GeneID" id="521998"/>
<dbReference type="KEGG" id="bta:521998"/>
<dbReference type="CTD" id="155061"/>
<dbReference type="VEuPathDB" id="HostDB:ENSBTAG00000031106"/>
<dbReference type="eggNOG" id="KOG1721">
    <property type="taxonomic scope" value="Eukaryota"/>
</dbReference>
<dbReference type="InParanoid" id="Q3B7M4"/>
<dbReference type="OMA" id="PEPCKYP"/>
<dbReference type="OrthoDB" id="654211at2759"/>
<dbReference type="Reactome" id="R-BTA-212436">
    <property type="pathway name" value="Generic Transcription Pathway"/>
</dbReference>
<dbReference type="Proteomes" id="UP000009136">
    <property type="component" value="Chromosome 4"/>
</dbReference>
<dbReference type="Bgee" id="ENSBTAG00000031106">
    <property type="expression patterns" value="Expressed in retina and 104 other cell types or tissues"/>
</dbReference>
<dbReference type="GO" id="GO:0005737">
    <property type="term" value="C:cytoplasm"/>
    <property type="evidence" value="ECO:0000250"/>
    <property type="project" value="UniProtKB"/>
</dbReference>
<dbReference type="GO" id="GO:0005634">
    <property type="term" value="C:nucleus"/>
    <property type="evidence" value="ECO:0007669"/>
    <property type="project" value="UniProtKB-SubCell"/>
</dbReference>
<dbReference type="GO" id="GO:0001227">
    <property type="term" value="F:DNA-binding transcription repressor activity, RNA polymerase II-specific"/>
    <property type="evidence" value="ECO:0000318"/>
    <property type="project" value="GO_Central"/>
</dbReference>
<dbReference type="GO" id="GO:0000976">
    <property type="term" value="F:transcription cis-regulatory region binding"/>
    <property type="evidence" value="ECO:0000250"/>
    <property type="project" value="UniProtKB"/>
</dbReference>
<dbReference type="GO" id="GO:0008270">
    <property type="term" value="F:zinc ion binding"/>
    <property type="evidence" value="ECO:0007669"/>
    <property type="project" value="UniProtKB-KW"/>
</dbReference>
<dbReference type="GO" id="GO:0045892">
    <property type="term" value="P:negative regulation of DNA-templated transcription"/>
    <property type="evidence" value="ECO:0000250"/>
    <property type="project" value="UniProtKB"/>
</dbReference>
<dbReference type="GO" id="GO:0051291">
    <property type="term" value="P:protein heterooligomerization"/>
    <property type="evidence" value="ECO:0000250"/>
    <property type="project" value="UniProtKB"/>
</dbReference>
<dbReference type="GO" id="GO:0051260">
    <property type="term" value="P:protein homooligomerization"/>
    <property type="evidence" value="ECO:0000250"/>
    <property type="project" value="UniProtKB"/>
</dbReference>
<dbReference type="CDD" id="cd07765">
    <property type="entry name" value="KRAB_A-box"/>
    <property type="match status" value="1"/>
</dbReference>
<dbReference type="FunFam" id="3.30.160.60:FF:000340">
    <property type="entry name" value="zinc finger protein 473 isoform X1"/>
    <property type="match status" value="1"/>
</dbReference>
<dbReference type="FunFam" id="3.30.160.60:FF:001063">
    <property type="entry name" value="zinc finger protein 746 isoform X1"/>
    <property type="match status" value="1"/>
</dbReference>
<dbReference type="FunFam" id="3.30.160.60:FF:001242">
    <property type="entry name" value="zinc finger protein 746 isoform X1"/>
    <property type="match status" value="1"/>
</dbReference>
<dbReference type="FunFam" id="3.30.160.60:FF:001364">
    <property type="entry name" value="zinc finger protein 746 isoform X1"/>
    <property type="match status" value="1"/>
</dbReference>
<dbReference type="Gene3D" id="6.10.140.140">
    <property type="match status" value="1"/>
</dbReference>
<dbReference type="Gene3D" id="3.30.160.60">
    <property type="entry name" value="Classic Zinc Finger"/>
    <property type="match status" value="4"/>
</dbReference>
<dbReference type="InterPro" id="IPR001909">
    <property type="entry name" value="KRAB"/>
</dbReference>
<dbReference type="InterPro" id="IPR036051">
    <property type="entry name" value="KRAB_dom_sf"/>
</dbReference>
<dbReference type="InterPro" id="IPR036236">
    <property type="entry name" value="Znf_C2H2_sf"/>
</dbReference>
<dbReference type="InterPro" id="IPR013087">
    <property type="entry name" value="Znf_C2H2_type"/>
</dbReference>
<dbReference type="PANTHER" id="PTHR24381:SF393">
    <property type="entry name" value="CHROMATIN-LINKED ADAPTOR FOR MSL PROTEINS, ISOFORM B"/>
    <property type="match status" value="1"/>
</dbReference>
<dbReference type="PANTHER" id="PTHR24381">
    <property type="entry name" value="ZINC FINGER PROTEIN"/>
    <property type="match status" value="1"/>
</dbReference>
<dbReference type="Pfam" id="PF01352">
    <property type="entry name" value="KRAB"/>
    <property type="match status" value="1"/>
</dbReference>
<dbReference type="Pfam" id="PF00096">
    <property type="entry name" value="zf-C2H2"/>
    <property type="match status" value="4"/>
</dbReference>
<dbReference type="SMART" id="SM00349">
    <property type="entry name" value="KRAB"/>
    <property type="match status" value="1"/>
</dbReference>
<dbReference type="SMART" id="SM00355">
    <property type="entry name" value="ZnF_C2H2"/>
    <property type="match status" value="4"/>
</dbReference>
<dbReference type="SUPFAM" id="SSF57667">
    <property type="entry name" value="beta-beta-alpha zinc fingers"/>
    <property type="match status" value="3"/>
</dbReference>
<dbReference type="SUPFAM" id="SSF109640">
    <property type="entry name" value="KRAB domain (Kruppel-associated box)"/>
    <property type="match status" value="1"/>
</dbReference>
<dbReference type="PROSITE" id="PS50805">
    <property type="entry name" value="KRAB"/>
    <property type="match status" value="1"/>
</dbReference>
<dbReference type="PROSITE" id="PS00028">
    <property type="entry name" value="ZINC_FINGER_C2H2_1"/>
    <property type="match status" value="3"/>
</dbReference>
<dbReference type="PROSITE" id="PS50157">
    <property type="entry name" value="ZINC_FINGER_C2H2_2"/>
    <property type="match status" value="4"/>
</dbReference>
<comment type="function">
    <text evidence="3">Transcription repressor that specifically binds to the 5'-TATTTT[T/G]-3' consensus sequence on promoters and repress transcription of PGC-1-alpha (PPARGC1A), thereby playing a role in regulation of neuron death.</text>
</comment>
<comment type="subunit">
    <text evidence="2 3">Interacts (via C2H2-type zinc fingers) with PRKN (By similarity). Interacts with TRIM28 (By similarity).</text>
</comment>
<comment type="subcellular location">
    <subcellularLocation>
        <location evidence="1">Cytoplasm</location>
    </subcellularLocation>
    <subcellularLocation>
        <location evidence="1">Nucleus</location>
    </subcellularLocation>
    <text evidence="1">Mainly localizes to the cytoplasm; probably translocates to the nucleus to repress selected genes.</text>
</comment>
<comment type="PTM">
    <text evidence="1">Ubiquitinated by PRKN. 'Lys-48'-linked polyubiquitination by PRKN leads to degradation by the proteasome and may play a key role in regulation of neuron death (By similarity).</text>
</comment>
<comment type="similarity">
    <text evidence="8">Belongs to the krueppel C2H2-type zinc-finger protein family.</text>
</comment>
<gene>
    <name evidence="3" type="primary">ZNF746</name>
</gene>